<feature type="chain" id="PRO_0000124900" description="Large ribosomal subunit protein uL5">
    <location>
        <begin position="1"/>
        <end position="185"/>
    </location>
</feature>
<reference key="1">
    <citation type="journal article" date="2002" name="DNA Res.">
        <title>Complete genomic sequence of nitrogen-fixing symbiotic bacterium Bradyrhizobium japonicum USDA110.</title>
        <authorList>
            <person name="Kaneko T."/>
            <person name="Nakamura Y."/>
            <person name="Sato S."/>
            <person name="Minamisawa K."/>
            <person name="Uchiumi T."/>
            <person name="Sasamoto S."/>
            <person name="Watanabe A."/>
            <person name="Idesawa K."/>
            <person name="Iriguchi M."/>
            <person name="Kawashima K."/>
            <person name="Kohara M."/>
            <person name="Matsumoto M."/>
            <person name="Shimpo S."/>
            <person name="Tsuruoka H."/>
            <person name="Wada T."/>
            <person name="Yamada M."/>
            <person name="Tabata S."/>
        </authorList>
    </citation>
    <scope>NUCLEOTIDE SEQUENCE [LARGE SCALE GENOMIC DNA]</scope>
    <source>
        <strain>JCM 10833 / BCRC 13528 / IAM 13628 / NBRC 14792 / USDA 110</strain>
    </source>
</reference>
<keyword id="KW-1185">Reference proteome</keyword>
<keyword id="KW-0687">Ribonucleoprotein</keyword>
<keyword id="KW-0689">Ribosomal protein</keyword>
<keyword id="KW-0694">RNA-binding</keyword>
<keyword id="KW-0699">rRNA-binding</keyword>
<keyword id="KW-0820">tRNA-binding</keyword>
<protein>
    <recommendedName>
        <fullName evidence="1">Large ribosomal subunit protein uL5</fullName>
    </recommendedName>
    <alternativeName>
        <fullName evidence="2">50S ribosomal protein L5</fullName>
    </alternativeName>
</protein>
<proteinExistence type="inferred from homology"/>
<organism>
    <name type="scientific">Bradyrhizobium diazoefficiens (strain JCM 10833 / BCRC 13528 / IAM 13628 / NBRC 14792 / USDA 110)</name>
    <dbReference type="NCBI Taxonomy" id="224911"/>
    <lineage>
        <taxon>Bacteria</taxon>
        <taxon>Pseudomonadati</taxon>
        <taxon>Pseudomonadota</taxon>
        <taxon>Alphaproteobacteria</taxon>
        <taxon>Hyphomicrobiales</taxon>
        <taxon>Nitrobacteraceae</taxon>
        <taxon>Bradyrhizobium</taxon>
    </lineage>
</organism>
<name>RL5_BRADU</name>
<sequence length="185" mass="20917">MAEAAYTPRLRAEYDAKIRTAMTEKFGYENVMQVPRLDKVVLNMGVGDSVNDRKKAETAAAELTQIAGQKAIVTYSRIAIATFKLRENQPIGCKVTLRKARMYEFIDRLVTVALPRVRDFRGLNPKSFDGRGNYSLGIKEHIIFPEIDFDKVTEARGMDITVCTTAKTDEEARALLTAFNFPFRQ</sequence>
<dbReference type="EMBL" id="BA000040">
    <property type="protein sequence ID" value="BAC50653.1"/>
    <property type="molecule type" value="Genomic_DNA"/>
</dbReference>
<dbReference type="RefSeq" id="NP_772028.1">
    <property type="nucleotide sequence ID" value="NC_004463.1"/>
</dbReference>
<dbReference type="RefSeq" id="WP_011088141.1">
    <property type="nucleotide sequence ID" value="NZ_CP011360.1"/>
</dbReference>
<dbReference type="SMR" id="Q89J96"/>
<dbReference type="FunCoup" id="Q89J96">
    <property type="interactions" value="801"/>
</dbReference>
<dbReference type="STRING" id="224911.AAV28_24350"/>
<dbReference type="EnsemblBacteria" id="BAC50653">
    <property type="protein sequence ID" value="BAC50653"/>
    <property type="gene ID" value="BAC50653"/>
</dbReference>
<dbReference type="GeneID" id="46492386"/>
<dbReference type="KEGG" id="bja:bll5388"/>
<dbReference type="PATRIC" id="fig|224911.44.peg.5287"/>
<dbReference type="eggNOG" id="COG0094">
    <property type="taxonomic scope" value="Bacteria"/>
</dbReference>
<dbReference type="HOGENOM" id="CLU_061015_2_1_5"/>
<dbReference type="InParanoid" id="Q89J96"/>
<dbReference type="OrthoDB" id="9806626at2"/>
<dbReference type="PhylomeDB" id="Q89J96"/>
<dbReference type="Proteomes" id="UP000002526">
    <property type="component" value="Chromosome"/>
</dbReference>
<dbReference type="GO" id="GO:0022625">
    <property type="term" value="C:cytosolic large ribosomal subunit"/>
    <property type="evidence" value="ECO:0000318"/>
    <property type="project" value="GO_Central"/>
</dbReference>
<dbReference type="GO" id="GO:0003723">
    <property type="term" value="F:RNA binding"/>
    <property type="evidence" value="ECO:0000318"/>
    <property type="project" value="GO_Central"/>
</dbReference>
<dbReference type="GO" id="GO:0019843">
    <property type="term" value="F:rRNA binding"/>
    <property type="evidence" value="ECO:0007669"/>
    <property type="project" value="UniProtKB-UniRule"/>
</dbReference>
<dbReference type="GO" id="GO:0003735">
    <property type="term" value="F:structural constituent of ribosome"/>
    <property type="evidence" value="ECO:0000318"/>
    <property type="project" value="GO_Central"/>
</dbReference>
<dbReference type="GO" id="GO:0000049">
    <property type="term" value="F:tRNA binding"/>
    <property type="evidence" value="ECO:0007669"/>
    <property type="project" value="UniProtKB-UniRule"/>
</dbReference>
<dbReference type="GO" id="GO:0006412">
    <property type="term" value="P:translation"/>
    <property type="evidence" value="ECO:0000318"/>
    <property type="project" value="GO_Central"/>
</dbReference>
<dbReference type="FunFam" id="3.30.1440.10:FF:000001">
    <property type="entry name" value="50S ribosomal protein L5"/>
    <property type="match status" value="1"/>
</dbReference>
<dbReference type="Gene3D" id="3.30.1440.10">
    <property type="match status" value="1"/>
</dbReference>
<dbReference type="HAMAP" id="MF_01333_B">
    <property type="entry name" value="Ribosomal_uL5_B"/>
    <property type="match status" value="1"/>
</dbReference>
<dbReference type="InterPro" id="IPR002132">
    <property type="entry name" value="Ribosomal_uL5"/>
</dbReference>
<dbReference type="InterPro" id="IPR020930">
    <property type="entry name" value="Ribosomal_uL5_bac-type"/>
</dbReference>
<dbReference type="InterPro" id="IPR031309">
    <property type="entry name" value="Ribosomal_uL5_C"/>
</dbReference>
<dbReference type="InterPro" id="IPR020929">
    <property type="entry name" value="Ribosomal_uL5_CS"/>
</dbReference>
<dbReference type="InterPro" id="IPR022803">
    <property type="entry name" value="Ribosomal_uL5_dom_sf"/>
</dbReference>
<dbReference type="InterPro" id="IPR031310">
    <property type="entry name" value="Ribosomal_uL5_N"/>
</dbReference>
<dbReference type="NCBIfam" id="NF000585">
    <property type="entry name" value="PRK00010.1"/>
    <property type="match status" value="1"/>
</dbReference>
<dbReference type="PANTHER" id="PTHR11994">
    <property type="entry name" value="60S RIBOSOMAL PROTEIN L11-RELATED"/>
    <property type="match status" value="1"/>
</dbReference>
<dbReference type="Pfam" id="PF00281">
    <property type="entry name" value="Ribosomal_L5"/>
    <property type="match status" value="1"/>
</dbReference>
<dbReference type="Pfam" id="PF00673">
    <property type="entry name" value="Ribosomal_L5_C"/>
    <property type="match status" value="1"/>
</dbReference>
<dbReference type="PIRSF" id="PIRSF002161">
    <property type="entry name" value="Ribosomal_L5"/>
    <property type="match status" value="1"/>
</dbReference>
<dbReference type="SUPFAM" id="SSF55282">
    <property type="entry name" value="RL5-like"/>
    <property type="match status" value="1"/>
</dbReference>
<dbReference type="PROSITE" id="PS00358">
    <property type="entry name" value="RIBOSOMAL_L5"/>
    <property type="match status" value="1"/>
</dbReference>
<accession>Q89J96</accession>
<comment type="function">
    <text evidence="1">This is one of the proteins that bind and probably mediate the attachment of the 5S RNA into the large ribosomal subunit, where it forms part of the central protuberance. In the 70S ribosome it contacts protein S13 of the 30S subunit (bridge B1b), connecting the 2 subunits; this bridge is implicated in subunit movement. Contacts the P site tRNA; the 5S rRNA and some of its associated proteins might help stabilize positioning of ribosome-bound tRNAs.</text>
</comment>
<comment type="subunit">
    <text evidence="1">Part of the 50S ribosomal subunit; part of the 5S rRNA/L5/L18/L25 subcomplex. Contacts the 5S rRNA and the P site tRNA. Forms a bridge to the 30S subunit in the 70S ribosome.</text>
</comment>
<comment type="similarity">
    <text evidence="1">Belongs to the universal ribosomal protein uL5 family.</text>
</comment>
<gene>
    <name evidence="1" type="primary">rplE</name>
    <name type="ordered locus">bll5388</name>
</gene>
<evidence type="ECO:0000255" key="1">
    <source>
        <dbReference type="HAMAP-Rule" id="MF_01333"/>
    </source>
</evidence>
<evidence type="ECO:0000305" key="2"/>